<feature type="signal peptide" evidence="2">
    <location>
        <begin position="1"/>
        <end position="18"/>
    </location>
</feature>
<feature type="chain" id="PRO_0000031904" description="Putative metal-binding protein CT_415">
    <location>
        <begin position="19"/>
        <end position="276"/>
    </location>
</feature>
<feature type="binding site" evidence="1">
    <location>
        <position position="59"/>
    </location>
    <ligand>
        <name>a divalent metal cation</name>
        <dbReference type="ChEBI" id="CHEBI:60240"/>
    </ligand>
</feature>
<feature type="binding site" evidence="1">
    <location>
        <position position="121"/>
    </location>
    <ligand>
        <name>a divalent metal cation</name>
        <dbReference type="ChEBI" id="CHEBI:60240"/>
    </ligand>
</feature>
<feature type="binding site" evidence="1">
    <location>
        <position position="185"/>
    </location>
    <ligand>
        <name>a divalent metal cation</name>
        <dbReference type="ChEBI" id="CHEBI:60240"/>
    </ligand>
</feature>
<feature type="binding site" evidence="1">
    <location>
        <position position="256"/>
    </location>
    <ligand>
        <name>a divalent metal cation</name>
        <dbReference type="ChEBI" id="CHEBI:60240"/>
    </ligand>
</feature>
<protein>
    <recommendedName>
        <fullName>Putative metal-binding protein CT_415</fullName>
    </recommendedName>
</protein>
<name>Y415_CHLTR</name>
<comment type="function">
    <text evidence="1">Part of an ATP-binding cassette (ABC) transport system involved in metal import (By similarity). Binds a metal with high affinity and specificity and delivers it to the membrane permease for translocation into the cytoplasm (By similarity).</text>
</comment>
<comment type="subcellular location">
    <subcellularLocation>
        <location evidence="1">Periplasm</location>
    </subcellularLocation>
</comment>
<comment type="similarity">
    <text evidence="3">Belongs to the bacterial solute-binding protein 9 family.</text>
</comment>
<dbReference type="EMBL" id="AE001273">
    <property type="protein sequence ID" value="AAC68012.1"/>
    <property type="molecule type" value="Genomic_DNA"/>
</dbReference>
<dbReference type="PIR" id="B71517">
    <property type="entry name" value="B71517"/>
</dbReference>
<dbReference type="RefSeq" id="WP_010725194.1">
    <property type="nucleotide sequence ID" value="NC_000117.1"/>
</dbReference>
<dbReference type="SMR" id="O84420"/>
<dbReference type="STRING" id="272561.CT_415"/>
<dbReference type="EnsemblBacteria" id="AAC68012">
    <property type="protein sequence ID" value="AAC68012"/>
    <property type="gene ID" value="CT_415"/>
</dbReference>
<dbReference type="KEGG" id="ctr:CT_415"/>
<dbReference type="PATRIC" id="fig|272561.5.peg.446"/>
<dbReference type="HOGENOM" id="CLU_016838_1_0_0"/>
<dbReference type="InParanoid" id="O84420"/>
<dbReference type="OrthoDB" id="9810636at2"/>
<dbReference type="Proteomes" id="UP000000431">
    <property type="component" value="Chromosome"/>
</dbReference>
<dbReference type="GO" id="GO:0042597">
    <property type="term" value="C:periplasmic space"/>
    <property type="evidence" value="ECO:0007669"/>
    <property type="project" value="UniProtKB-SubCell"/>
</dbReference>
<dbReference type="GO" id="GO:0046872">
    <property type="term" value="F:metal ion binding"/>
    <property type="evidence" value="ECO:0007669"/>
    <property type="project" value="UniProtKB-KW"/>
</dbReference>
<dbReference type="GO" id="GO:0007155">
    <property type="term" value="P:cell adhesion"/>
    <property type="evidence" value="ECO:0007669"/>
    <property type="project" value="InterPro"/>
</dbReference>
<dbReference type="GO" id="GO:0030001">
    <property type="term" value="P:metal ion transport"/>
    <property type="evidence" value="ECO:0007669"/>
    <property type="project" value="InterPro"/>
</dbReference>
<dbReference type="Gene3D" id="3.40.50.1980">
    <property type="entry name" value="Nitrogenase molybdenum iron protein domain"/>
    <property type="match status" value="2"/>
</dbReference>
<dbReference type="InterPro" id="IPR050492">
    <property type="entry name" value="Bact_metal-bind_prot9"/>
</dbReference>
<dbReference type="InterPro" id="IPR006128">
    <property type="entry name" value="Lipoprotein_PsaA-like"/>
</dbReference>
<dbReference type="InterPro" id="IPR006127">
    <property type="entry name" value="ZnuA-like"/>
</dbReference>
<dbReference type="PANTHER" id="PTHR42953:SF3">
    <property type="entry name" value="HIGH-AFFINITY ZINC UPTAKE SYSTEM PROTEIN ZNUA"/>
    <property type="match status" value="1"/>
</dbReference>
<dbReference type="PANTHER" id="PTHR42953">
    <property type="entry name" value="HIGH-AFFINITY ZINC UPTAKE SYSTEM PROTEIN ZNUA-RELATED"/>
    <property type="match status" value="1"/>
</dbReference>
<dbReference type="Pfam" id="PF01297">
    <property type="entry name" value="ZnuA"/>
    <property type="match status" value="1"/>
</dbReference>
<dbReference type="PRINTS" id="PR00690">
    <property type="entry name" value="ADHESNFAMILY"/>
</dbReference>
<dbReference type="SUPFAM" id="SSF53807">
    <property type="entry name" value="Helical backbone' metal receptor"/>
    <property type="match status" value="1"/>
</dbReference>
<gene>
    <name type="ordered locus">CT_415</name>
</gene>
<evidence type="ECO:0000250" key="1">
    <source>
        <dbReference type="UniProtKB" id="Q9S529"/>
    </source>
</evidence>
<evidence type="ECO:0000255" key="2"/>
<evidence type="ECO:0000305" key="3"/>
<reference key="1">
    <citation type="journal article" date="1998" name="Science">
        <title>Genome sequence of an obligate intracellular pathogen of humans: Chlamydia trachomatis.</title>
        <authorList>
            <person name="Stephens R.S."/>
            <person name="Kalman S."/>
            <person name="Lammel C.J."/>
            <person name="Fan J."/>
            <person name="Marathe R."/>
            <person name="Aravind L."/>
            <person name="Mitchell W.P."/>
            <person name="Olinger L."/>
            <person name="Tatusov R.L."/>
            <person name="Zhao Q."/>
            <person name="Koonin E.V."/>
            <person name="Davis R.W."/>
        </authorList>
    </citation>
    <scope>NUCLEOTIDE SEQUENCE [LARGE SCALE GENOMIC DNA]</scope>
    <source>
        <strain>ATCC VR-885 / DSM 19411 / UW-3/Cx</strain>
    </source>
</reference>
<organism>
    <name type="scientific">Chlamydia trachomatis serovar D (strain ATCC VR-885 / DSM 19411 / UW-3/Cx)</name>
    <dbReference type="NCBI Taxonomy" id="272561"/>
    <lineage>
        <taxon>Bacteria</taxon>
        <taxon>Pseudomonadati</taxon>
        <taxon>Chlamydiota</taxon>
        <taxon>Chlamydiia</taxon>
        <taxon>Chlamydiales</taxon>
        <taxon>Chlamydiaceae</taxon>
        <taxon>Chlamydia/Chlamydophila group</taxon>
        <taxon>Chlamydia</taxon>
    </lineage>
</organism>
<accession>O84420</accession>
<sequence length="276" mass="31434">MRLLFLLLFSLGITCSYGDEVSTRKQILVSIVPYKFLVEQIAGDTCQVFSIVMDNHDPHNYELSPKYIEKIRQVELWFKIGEGFEKTCERIISCKQVDLAANIDKITNGACCQRFLSFDTHTWLSPKNLKIQIQAITEALVETAPEHETLYRKNCSLLQSQLDLLDQKISSIVSSTSQRNVLVTHGAFAYFCRDYGFIQHTIERANHSELSPKDVVRVERTIRDHNLHSVILLKHAGKRSSAALVRKFNMTPILLDPYAEDVFNNLLAIATAFANL</sequence>
<keyword id="KW-0479">Metal-binding</keyword>
<keyword id="KW-0574">Periplasm</keyword>
<keyword id="KW-1185">Reference proteome</keyword>
<keyword id="KW-0732">Signal</keyword>
<keyword id="KW-0813">Transport</keyword>
<proteinExistence type="inferred from homology"/>